<comment type="function">
    <text evidence="1">NAD-binding protein involved in the addition of a carboxymethylaminomethyl (cmnm) group at the wobble position (U34) of certain tRNAs, forming tRNA-cmnm(5)s(2)U34.</text>
</comment>
<comment type="cofactor">
    <cofactor evidence="1">
        <name>FAD</name>
        <dbReference type="ChEBI" id="CHEBI:57692"/>
    </cofactor>
</comment>
<comment type="subunit">
    <text evidence="1">Homodimer. Heterotetramer of two MnmE and two MnmG subunits.</text>
</comment>
<comment type="subcellular location">
    <subcellularLocation>
        <location evidence="1">Cytoplasm</location>
    </subcellularLocation>
</comment>
<comment type="similarity">
    <text evidence="1">Belongs to the MnmG family.</text>
</comment>
<sequence length="628" mass="69578">MIYPKTYDVIVVGGGHAGTEAALAAARMGAQTLLLTHNIETLGQMSCNPSIGGIGKGHLVRELDALGGAMALATDKSGIQFRRLNASKGAAVRATRAQADRILYKAAIREMLENQENLDLFQQAVEDVTLDGERISGVITAMGVEFKARAVVLTAGTFLSGKIHIGLENYEGGRAGDPAAKSLGGRLRELKLPQGRLKTGTPPRIDGRTIDFSQLTEQPGDTPVPVMSVRGNAEMHPRQVSCWITHTNTQTHDIIRSGFDRSPMFTGKIEGVGPRYCPSIEDKINRFADKDSHQIFLEPEGLTTYEYYPNGISTSLPFDIQIALVRSMKGLENAHILRPGYAIEYDYFDPRNLKASLETKTIEGLFFAGQINGTTGYEEAAAQGLLAGANAVQYVRGQDPLLLRREQAYLGVLVDDLITKGVNEPYRMFTSRAEYRLQLREDNADMRLTEDGYKIGLVGEAQWRMFNEKREAVEREIQRLKTTWYTPQKLAEDEQIRVFGQKLSREANLHDLLRRPNLDYAALMTLEGAMPSENLSAEVIEQVEIQVKYQGYIDRQNEEIDSRRDIETLKLPDGIDYGKVKGLSAEVQQKLNQHKPETVGQASRISGVTPAAVALLMVHLKRGFKDAK</sequence>
<reference key="1">
    <citation type="journal article" date="2000" name="Nature">
        <title>Complete DNA sequence of a serogroup A strain of Neisseria meningitidis Z2491.</title>
        <authorList>
            <person name="Parkhill J."/>
            <person name="Achtman M."/>
            <person name="James K.D."/>
            <person name="Bentley S.D."/>
            <person name="Churcher C.M."/>
            <person name="Klee S.R."/>
            <person name="Morelli G."/>
            <person name="Basham D."/>
            <person name="Brown D."/>
            <person name="Chillingworth T."/>
            <person name="Davies R.M."/>
            <person name="Davis P."/>
            <person name="Devlin K."/>
            <person name="Feltwell T."/>
            <person name="Hamlin N."/>
            <person name="Holroyd S."/>
            <person name="Jagels K."/>
            <person name="Leather S."/>
            <person name="Moule S."/>
            <person name="Mungall K.L."/>
            <person name="Quail M.A."/>
            <person name="Rajandream M.A."/>
            <person name="Rutherford K.M."/>
            <person name="Simmonds M."/>
            <person name="Skelton J."/>
            <person name="Whitehead S."/>
            <person name="Spratt B.G."/>
            <person name="Barrell B.G."/>
        </authorList>
    </citation>
    <scope>NUCLEOTIDE SEQUENCE [LARGE SCALE GENOMIC DNA]</scope>
    <source>
        <strain>DSM 15465 / Z2491</strain>
    </source>
</reference>
<gene>
    <name evidence="1" type="primary">mnmG</name>
    <name evidence="1" type="synonym">gidA</name>
    <name type="ordered locus">NMA0074</name>
</gene>
<dbReference type="EMBL" id="AL157959">
    <property type="protein sequence ID" value="CAM07393.1"/>
    <property type="molecule type" value="Genomic_DNA"/>
</dbReference>
<dbReference type="PIR" id="A81999">
    <property type="entry name" value="A81999"/>
</dbReference>
<dbReference type="SMR" id="Q9JX41"/>
<dbReference type="EnsemblBacteria" id="CAM07393">
    <property type="protein sequence ID" value="CAM07393"/>
    <property type="gene ID" value="NMA0074"/>
</dbReference>
<dbReference type="KEGG" id="nma:NMA0074"/>
<dbReference type="HOGENOM" id="CLU_007831_2_2_4"/>
<dbReference type="Proteomes" id="UP000000626">
    <property type="component" value="Chromosome"/>
</dbReference>
<dbReference type="GO" id="GO:0005829">
    <property type="term" value="C:cytosol"/>
    <property type="evidence" value="ECO:0007669"/>
    <property type="project" value="TreeGrafter"/>
</dbReference>
<dbReference type="GO" id="GO:0050660">
    <property type="term" value="F:flavin adenine dinucleotide binding"/>
    <property type="evidence" value="ECO:0007669"/>
    <property type="project" value="UniProtKB-UniRule"/>
</dbReference>
<dbReference type="GO" id="GO:0030488">
    <property type="term" value="P:tRNA methylation"/>
    <property type="evidence" value="ECO:0007669"/>
    <property type="project" value="TreeGrafter"/>
</dbReference>
<dbReference type="GO" id="GO:0002098">
    <property type="term" value="P:tRNA wobble uridine modification"/>
    <property type="evidence" value="ECO:0007669"/>
    <property type="project" value="InterPro"/>
</dbReference>
<dbReference type="FunFam" id="1.10.10.1800:FF:000001">
    <property type="entry name" value="tRNA uridine 5-carboxymethylaminomethyl modification enzyme MnmG"/>
    <property type="match status" value="1"/>
</dbReference>
<dbReference type="FunFam" id="1.10.150.570:FF:000001">
    <property type="entry name" value="tRNA uridine 5-carboxymethylaminomethyl modification enzyme MnmG"/>
    <property type="match status" value="1"/>
</dbReference>
<dbReference type="FunFam" id="3.50.50.60:FF:000002">
    <property type="entry name" value="tRNA uridine 5-carboxymethylaminomethyl modification enzyme MnmG"/>
    <property type="match status" value="1"/>
</dbReference>
<dbReference type="FunFam" id="3.50.50.60:FF:000010">
    <property type="entry name" value="tRNA uridine 5-carboxymethylaminomethyl modification enzyme MnmG"/>
    <property type="match status" value="1"/>
</dbReference>
<dbReference type="Gene3D" id="3.50.50.60">
    <property type="entry name" value="FAD/NAD(P)-binding domain"/>
    <property type="match status" value="2"/>
</dbReference>
<dbReference type="Gene3D" id="1.10.150.570">
    <property type="entry name" value="GidA associated domain, C-terminal subdomain"/>
    <property type="match status" value="1"/>
</dbReference>
<dbReference type="Gene3D" id="1.10.10.1800">
    <property type="entry name" value="tRNA uridine 5-carboxymethylaminomethyl modification enzyme MnmG/GidA"/>
    <property type="match status" value="1"/>
</dbReference>
<dbReference type="HAMAP" id="MF_00129">
    <property type="entry name" value="MnmG_GidA"/>
    <property type="match status" value="1"/>
</dbReference>
<dbReference type="InterPro" id="IPR036188">
    <property type="entry name" value="FAD/NAD-bd_sf"/>
</dbReference>
<dbReference type="InterPro" id="IPR049312">
    <property type="entry name" value="GIDA_C_N"/>
</dbReference>
<dbReference type="InterPro" id="IPR004416">
    <property type="entry name" value="MnmG"/>
</dbReference>
<dbReference type="InterPro" id="IPR002218">
    <property type="entry name" value="MnmG-rel"/>
</dbReference>
<dbReference type="InterPro" id="IPR020595">
    <property type="entry name" value="MnmG-rel_CS"/>
</dbReference>
<dbReference type="InterPro" id="IPR026904">
    <property type="entry name" value="MnmG_C"/>
</dbReference>
<dbReference type="InterPro" id="IPR047001">
    <property type="entry name" value="MnmG_C_subdom"/>
</dbReference>
<dbReference type="InterPro" id="IPR044920">
    <property type="entry name" value="MnmG_C_subdom_sf"/>
</dbReference>
<dbReference type="InterPro" id="IPR040131">
    <property type="entry name" value="MnmG_N"/>
</dbReference>
<dbReference type="NCBIfam" id="TIGR00136">
    <property type="entry name" value="mnmG_gidA"/>
    <property type="match status" value="1"/>
</dbReference>
<dbReference type="PANTHER" id="PTHR11806">
    <property type="entry name" value="GLUCOSE INHIBITED DIVISION PROTEIN A"/>
    <property type="match status" value="1"/>
</dbReference>
<dbReference type="PANTHER" id="PTHR11806:SF0">
    <property type="entry name" value="PROTEIN MTO1 HOMOLOG, MITOCHONDRIAL"/>
    <property type="match status" value="1"/>
</dbReference>
<dbReference type="Pfam" id="PF01134">
    <property type="entry name" value="GIDA"/>
    <property type="match status" value="1"/>
</dbReference>
<dbReference type="Pfam" id="PF21680">
    <property type="entry name" value="GIDA_C_1st"/>
    <property type="match status" value="1"/>
</dbReference>
<dbReference type="Pfam" id="PF13932">
    <property type="entry name" value="SAM_GIDA_C"/>
    <property type="match status" value="1"/>
</dbReference>
<dbReference type="SMART" id="SM01228">
    <property type="entry name" value="GIDA_assoc_3"/>
    <property type="match status" value="1"/>
</dbReference>
<dbReference type="SUPFAM" id="SSF51905">
    <property type="entry name" value="FAD/NAD(P)-binding domain"/>
    <property type="match status" value="1"/>
</dbReference>
<dbReference type="PROSITE" id="PS01280">
    <property type="entry name" value="GIDA_1"/>
    <property type="match status" value="1"/>
</dbReference>
<dbReference type="PROSITE" id="PS01281">
    <property type="entry name" value="GIDA_2"/>
    <property type="match status" value="1"/>
</dbReference>
<name>MNMG_NEIMA</name>
<organism>
    <name type="scientific">Neisseria meningitidis serogroup A / serotype 4A (strain DSM 15465 / Z2491)</name>
    <dbReference type="NCBI Taxonomy" id="122587"/>
    <lineage>
        <taxon>Bacteria</taxon>
        <taxon>Pseudomonadati</taxon>
        <taxon>Pseudomonadota</taxon>
        <taxon>Betaproteobacteria</taxon>
        <taxon>Neisseriales</taxon>
        <taxon>Neisseriaceae</taxon>
        <taxon>Neisseria</taxon>
    </lineage>
</organism>
<keyword id="KW-0963">Cytoplasm</keyword>
<keyword id="KW-0274">FAD</keyword>
<keyword id="KW-0285">Flavoprotein</keyword>
<keyword id="KW-0520">NAD</keyword>
<keyword id="KW-0819">tRNA processing</keyword>
<proteinExistence type="inferred from homology"/>
<accession>Q9JX41</accession>
<accession>A1INT6</accession>
<feature type="chain" id="PRO_0000117140" description="tRNA uridine 5-carboxymethylaminomethyl modification enzyme MnmG">
    <location>
        <begin position="1"/>
        <end position="628"/>
    </location>
</feature>
<feature type="binding site" evidence="1">
    <location>
        <begin position="13"/>
        <end position="18"/>
    </location>
    <ligand>
        <name>FAD</name>
        <dbReference type="ChEBI" id="CHEBI:57692"/>
    </ligand>
</feature>
<feature type="binding site" evidence="1">
    <location>
        <begin position="273"/>
        <end position="287"/>
    </location>
    <ligand>
        <name>NAD(+)</name>
        <dbReference type="ChEBI" id="CHEBI:57540"/>
    </ligand>
</feature>
<evidence type="ECO:0000255" key="1">
    <source>
        <dbReference type="HAMAP-Rule" id="MF_00129"/>
    </source>
</evidence>
<protein>
    <recommendedName>
        <fullName evidence="1">tRNA uridine 5-carboxymethylaminomethyl modification enzyme MnmG</fullName>
    </recommendedName>
    <alternativeName>
        <fullName evidence="1">Glucose-inhibited division protein A</fullName>
    </alternativeName>
</protein>